<gene>
    <name type="ordered locus">At3g04660</name>
    <name type="ORF">F7O18.14</name>
</gene>
<sequence>MKKRGRKSKKPEEKRAEYDPSSILPLELKIEILMKSPPKSIAKLGFVSNHWSSIIRGQVFTDLYMRRSLAHPRLLFSVYRPNMQMQFFHSCSQEDPSSDHRSVSYTLNSDLRYSFSPPIGGLIFGQNNTKAMIGNPSTGQFVPLPRIKTQRKHIFSIFGYDPVNDLYKVLCMTVRTLRGPHYFRWEDPMWEEPMTEEHQVFTLGPKQKWRMLECKYLHRHHSGSQGICRDGVMYYLASFNDKRSLMSFDLSSEEFNVTKLPEDYILQQFGNMVDHSGKIAIVSQAYSGPMDLWVLEDVSKEEWSKVAAIVPSITDIVGNDQRVIFRGILSTGEIILSLLPTPKPPFFFLCYDPKEKTARKVVIQGIGEDYAAINVFFDHVESHMVLSKLT</sequence>
<comment type="function">
    <text evidence="1">Component of SCF(ASK-cullin-F-box) E3 ubiquitin ligase complexes, which may mediate the ubiquitination and subsequent proteasomal degradation of target proteins.</text>
</comment>
<comment type="pathway">
    <text>Protein modification; protein ubiquitination.</text>
</comment>
<comment type="subunit">
    <text evidence="1 2">Part of a SCF (ASK-cullin-F-box) protein ligase complex (By similarity). Interacts with SKP1A/ASK1, SKP1B/ASK2, ASK11 and ASK13.</text>
</comment>
<comment type="subcellular location">
    <subcellularLocation>
        <location evidence="1">Nucleus</location>
    </subcellularLocation>
</comment>
<comment type="domain">
    <text evidence="1">The F-box is necessary for the interaction with ASK proteins.</text>
</comment>
<accession>Q9SR08</accession>
<dbReference type="EMBL" id="AC011437">
    <property type="protein sequence ID" value="AAF04896.1"/>
    <property type="molecule type" value="Genomic_DNA"/>
</dbReference>
<dbReference type="EMBL" id="CP002686">
    <property type="protein sequence ID" value="AEE74115.1"/>
    <property type="molecule type" value="Genomic_DNA"/>
</dbReference>
<dbReference type="RefSeq" id="NP_187117.1">
    <property type="nucleotide sequence ID" value="NM_111338.3"/>
</dbReference>
<dbReference type="SMR" id="Q9SR08"/>
<dbReference type="BioGRID" id="4959">
    <property type="interactions" value="2"/>
</dbReference>
<dbReference type="FunCoup" id="Q9SR08">
    <property type="interactions" value="35"/>
</dbReference>
<dbReference type="STRING" id="3702.Q9SR08"/>
<dbReference type="iPTMnet" id="Q9SR08"/>
<dbReference type="PaxDb" id="3702-AT3G04660.1"/>
<dbReference type="EnsemblPlants" id="AT3G04660.1">
    <property type="protein sequence ID" value="AT3G04660.1"/>
    <property type="gene ID" value="AT3G04660"/>
</dbReference>
<dbReference type="GeneID" id="819624"/>
<dbReference type="Gramene" id="AT3G04660.1">
    <property type="protein sequence ID" value="AT3G04660.1"/>
    <property type="gene ID" value="AT3G04660"/>
</dbReference>
<dbReference type="KEGG" id="ath:AT3G04660"/>
<dbReference type="Araport" id="AT3G04660"/>
<dbReference type="TAIR" id="AT3G04660"/>
<dbReference type="HOGENOM" id="CLU_027176_8_1_1"/>
<dbReference type="InParanoid" id="Q9SR08"/>
<dbReference type="OMA" id="HICGANQ"/>
<dbReference type="PhylomeDB" id="Q9SR08"/>
<dbReference type="UniPathway" id="UPA00143"/>
<dbReference type="PRO" id="PR:Q9SR08"/>
<dbReference type="Proteomes" id="UP000006548">
    <property type="component" value="Chromosome 3"/>
</dbReference>
<dbReference type="ExpressionAtlas" id="Q9SR08">
    <property type="expression patterns" value="baseline and differential"/>
</dbReference>
<dbReference type="GO" id="GO:0005737">
    <property type="term" value="C:cytoplasm"/>
    <property type="evidence" value="ECO:0000314"/>
    <property type="project" value="TAIR"/>
</dbReference>
<dbReference type="GO" id="GO:0005634">
    <property type="term" value="C:nucleus"/>
    <property type="evidence" value="ECO:0007669"/>
    <property type="project" value="UniProtKB-SubCell"/>
</dbReference>
<dbReference type="GO" id="GO:0016567">
    <property type="term" value="P:protein ubiquitination"/>
    <property type="evidence" value="ECO:0007669"/>
    <property type="project" value="UniProtKB-UniPathway"/>
</dbReference>
<dbReference type="InterPro" id="IPR013187">
    <property type="entry name" value="F-box-assoc_dom_typ3"/>
</dbReference>
<dbReference type="InterPro" id="IPR017451">
    <property type="entry name" value="F-box-assoc_interact_dom"/>
</dbReference>
<dbReference type="InterPro" id="IPR036047">
    <property type="entry name" value="F-box-like_dom_sf"/>
</dbReference>
<dbReference type="InterPro" id="IPR001810">
    <property type="entry name" value="F-box_dom"/>
</dbReference>
<dbReference type="NCBIfam" id="TIGR01640">
    <property type="entry name" value="F_box_assoc_1"/>
    <property type="match status" value="1"/>
</dbReference>
<dbReference type="PANTHER" id="PTHR31111">
    <property type="entry name" value="BNAA05G37150D PROTEIN-RELATED"/>
    <property type="match status" value="1"/>
</dbReference>
<dbReference type="PANTHER" id="PTHR31111:SF60">
    <property type="entry name" value="F-BOX DOMAIN-CONTAINING PROTEIN"/>
    <property type="match status" value="1"/>
</dbReference>
<dbReference type="Pfam" id="PF00646">
    <property type="entry name" value="F-box"/>
    <property type="match status" value="1"/>
</dbReference>
<dbReference type="Pfam" id="PF08268">
    <property type="entry name" value="FBA_3"/>
    <property type="match status" value="1"/>
</dbReference>
<dbReference type="SMART" id="SM00256">
    <property type="entry name" value="FBOX"/>
    <property type="match status" value="1"/>
</dbReference>
<dbReference type="SUPFAM" id="SSF81383">
    <property type="entry name" value="F-box domain"/>
    <property type="match status" value="1"/>
</dbReference>
<evidence type="ECO:0000250" key="1"/>
<evidence type="ECO:0000269" key="2">
    <source>
    </source>
</evidence>
<keyword id="KW-0880">Kelch repeat</keyword>
<keyword id="KW-0539">Nucleus</keyword>
<keyword id="KW-1185">Reference proteome</keyword>
<keyword id="KW-0677">Repeat</keyword>
<keyword id="KW-0833">Ubl conjugation pathway</keyword>
<feature type="chain" id="PRO_0000283209" description="F-box/kelch-repeat protein At3g04660">
    <location>
        <begin position="1"/>
        <end position="390"/>
    </location>
</feature>
<feature type="domain" description="F-box">
    <location>
        <begin position="18"/>
        <end position="67"/>
    </location>
</feature>
<feature type="repeat" description="Kelch 1">
    <location>
        <begin position="115"/>
        <end position="161"/>
    </location>
</feature>
<feature type="repeat" description="Kelch 2">
    <location>
        <begin position="272"/>
        <end position="323"/>
    </location>
</feature>
<organism>
    <name type="scientific">Arabidopsis thaliana</name>
    <name type="common">Mouse-ear cress</name>
    <dbReference type="NCBI Taxonomy" id="3702"/>
    <lineage>
        <taxon>Eukaryota</taxon>
        <taxon>Viridiplantae</taxon>
        <taxon>Streptophyta</taxon>
        <taxon>Embryophyta</taxon>
        <taxon>Tracheophyta</taxon>
        <taxon>Spermatophyta</taxon>
        <taxon>Magnoliopsida</taxon>
        <taxon>eudicotyledons</taxon>
        <taxon>Gunneridae</taxon>
        <taxon>Pentapetalae</taxon>
        <taxon>rosids</taxon>
        <taxon>malvids</taxon>
        <taxon>Brassicales</taxon>
        <taxon>Brassicaceae</taxon>
        <taxon>Camelineae</taxon>
        <taxon>Arabidopsis</taxon>
    </lineage>
</organism>
<reference key="1">
    <citation type="journal article" date="2000" name="Nature">
        <title>Sequence and analysis of chromosome 3 of the plant Arabidopsis thaliana.</title>
        <authorList>
            <person name="Salanoubat M."/>
            <person name="Lemcke K."/>
            <person name="Rieger M."/>
            <person name="Ansorge W."/>
            <person name="Unseld M."/>
            <person name="Fartmann B."/>
            <person name="Valle G."/>
            <person name="Bloecker H."/>
            <person name="Perez-Alonso M."/>
            <person name="Obermaier B."/>
            <person name="Delseny M."/>
            <person name="Boutry M."/>
            <person name="Grivell L.A."/>
            <person name="Mache R."/>
            <person name="Puigdomenech P."/>
            <person name="De Simone V."/>
            <person name="Choisne N."/>
            <person name="Artiguenave F."/>
            <person name="Robert C."/>
            <person name="Brottier P."/>
            <person name="Wincker P."/>
            <person name="Cattolico L."/>
            <person name="Weissenbach J."/>
            <person name="Saurin W."/>
            <person name="Quetier F."/>
            <person name="Schaefer M."/>
            <person name="Mueller-Auer S."/>
            <person name="Gabel C."/>
            <person name="Fuchs M."/>
            <person name="Benes V."/>
            <person name="Wurmbach E."/>
            <person name="Drzonek H."/>
            <person name="Erfle H."/>
            <person name="Jordan N."/>
            <person name="Bangert S."/>
            <person name="Wiedelmann R."/>
            <person name="Kranz H."/>
            <person name="Voss H."/>
            <person name="Holland R."/>
            <person name="Brandt P."/>
            <person name="Nyakatura G."/>
            <person name="Vezzi A."/>
            <person name="D'Angelo M."/>
            <person name="Pallavicini A."/>
            <person name="Toppo S."/>
            <person name="Simionati B."/>
            <person name="Conrad A."/>
            <person name="Hornischer K."/>
            <person name="Kauer G."/>
            <person name="Loehnert T.-H."/>
            <person name="Nordsiek G."/>
            <person name="Reichelt J."/>
            <person name="Scharfe M."/>
            <person name="Schoen O."/>
            <person name="Bargues M."/>
            <person name="Terol J."/>
            <person name="Climent J."/>
            <person name="Navarro P."/>
            <person name="Collado C."/>
            <person name="Perez-Perez A."/>
            <person name="Ottenwaelder B."/>
            <person name="Duchemin D."/>
            <person name="Cooke R."/>
            <person name="Laudie M."/>
            <person name="Berger-Llauro C."/>
            <person name="Purnelle B."/>
            <person name="Masuy D."/>
            <person name="de Haan M."/>
            <person name="Maarse A.C."/>
            <person name="Alcaraz J.-P."/>
            <person name="Cottet A."/>
            <person name="Casacuberta E."/>
            <person name="Monfort A."/>
            <person name="Argiriou A."/>
            <person name="Flores M."/>
            <person name="Liguori R."/>
            <person name="Vitale D."/>
            <person name="Mannhaupt G."/>
            <person name="Haase D."/>
            <person name="Schoof H."/>
            <person name="Rudd S."/>
            <person name="Zaccaria P."/>
            <person name="Mewes H.-W."/>
            <person name="Mayer K.F.X."/>
            <person name="Kaul S."/>
            <person name="Town C.D."/>
            <person name="Koo H.L."/>
            <person name="Tallon L.J."/>
            <person name="Jenkins J."/>
            <person name="Rooney T."/>
            <person name="Rizzo M."/>
            <person name="Walts A."/>
            <person name="Utterback T."/>
            <person name="Fujii C.Y."/>
            <person name="Shea T.P."/>
            <person name="Creasy T.H."/>
            <person name="Haas B."/>
            <person name="Maiti R."/>
            <person name="Wu D."/>
            <person name="Peterson J."/>
            <person name="Van Aken S."/>
            <person name="Pai G."/>
            <person name="Militscher J."/>
            <person name="Sellers P."/>
            <person name="Gill J.E."/>
            <person name="Feldblyum T.V."/>
            <person name="Preuss D."/>
            <person name="Lin X."/>
            <person name="Nierman W.C."/>
            <person name="Salzberg S.L."/>
            <person name="White O."/>
            <person name="Venter J.C."/>
            <person name="Fraser C.M."/>
            <person name="Kaneko T."/>
            <person name="Nakamura Y."/>
            <person name="Sato S."/>
            <person name="Kato T."/>
            <person name="Asamizu E."/>
            <person name="Sasamoto S."/>
            <person name="Kimura T."/>
            <person name="Idesawa K."/>
            <person name="Kawashima K."/>
            <person name="Kishida Y."/>
            <person name="Kiyokawa C."/>
            <person name="Kohara M."/>
            <person name="Matsumoto M."/>
            <person name="Matsuno A."/>
            <person name="Muraki A."/>
            <person name="Nakayama S."/>
            <person name="Nakazaki N."/>
            <person name="Shinpo S."/>
            <person name="Takeuchi C."/>
            <person name="Wada T."/>
            <person name="Watanabe A."/>
            <person name="Yamada M."/>
            <person name="Yasuda M."/>
            <person name="Tabata S."/>
        </authorList>
    </citation>
    <scope>NUCLEOTIDE SEQUENCE [LARGE SCALE GENOMIC DNA]</scope>
    <source>
        <strain>cv. Columbia</strain>
    </source>
</reference>
<reference key="2">
    <citation type="journal article" date="2017" name="Plant J.">
        <title>Araport11: a complete reannotation of the Arabidopsis thaliana reference genome.</title>
        <authorList>
            <person name="Cheng C.Y."/>
            <person name="Krishnakumar V."/>
            <person name="Chan A.P."/>
            <person name="Thibaud-Nissen F."/>
            <person name="Schobel S."/>
            <person name="Town C.D."/>
        </authorList>
    </citation>
    <scope>GENOME REANNOTATION</scope>
    <source>
        <strain>cv. Columbia</strain>
    </source>
</reference>
<reference key="3">
    <citation type="journal article" date="2002" name="Proc. Natl. Acad. Sci. U.S.A.">
        <title>The F-box subunit of the SCF E3 complex is encoded by a diverse superfamily of genes in Arabidopsis.</title>
        <authorList>
            <person name="Gagne J.M."/>
            <person name="Downes B.P."/>
            <person name="Shiu S.-H."/>
            <person name="Durski A.M."/>
            <person name="Vierstra R.D."/>
        </authorList>
    </citation>
    <scope>INTERACTION WITH SKP1A/ASK1; SKP1B/ASK2; ASK11 AND ASK13</scope>
</reference>
<name>FBK49_ARATH</name>
<proteinExistence type="evidence at protein level"/>
<protein>
    <recommendedName>
        <fullName>F-box/kelch-repeat protein At3g04660</fullName>
    </recommendedName>
</protein>